<sequence>MQSTESFHALPTRSDVEDPNERRKIQNRIAQKKHRQKMKRRIEELETKVNNQCQTSNWTSHAPTDSCQEQQFLDNTDFGLMLEDDLLYRELSASLDGAGLTAVAQMHDSPRPNQQQRLSVSGMPSSPTSTSNVAQRGLSIGDHSSASNHLSSLSLVPGSTEGSLPTRQHDNLCNQDLRDMVPEEKMSRILKVIQDAGYKDMDSFMTEYYVRDFDASSHVSAVQRQSRSRRLRGFLEQLRVGAESWSDYEAHDYQQEISKSAEAIYAKELDVFSTTTLGENASFQGLASLYRVLQSTVGSDIENHLRHEQSMMQRQVSEIVHRQVYTFNPAQC</sequence>
<accession>I1RFC6</accession>
<accession>Q2VLJ0</accession>
<name>ZEB2_GIBZE</name>
<keyword id="KW-0539">Nucleus</keyword>
<keyword id="KW-1185">Reference proteome</keyword>
<keyword id="KW-0804">Transcription</keyword>
<keyword id="KW-0805">Transcription regulation</keyword>
<gene>
    <name evidence="4" type="primary">ZEB2</name>
    <name type="ORF">FGRAMPH1_01T05755</name>
    <name type="ORF">FGSG_02398</name>
</gene>
<reference key="1">
    <citation type="journal article" date="2005" name="Mol. Microbiol.">
        <title>Two different polyketide synthase genes are required for synthesis of zearalenone in Gibberella zeae.</title>
        <authorList>
            <person name="Kim Y.T."/>
            <person name="Lee Y.R."/>
            <person name="Jin J."/>
            <person name="Han K.H."/>
            <person name="Kim H."/>
            <person name="Kim J.C."/>
            <person name="Lee T."/>
            <person name="Yun S.H."/>
            <person name="Lee Y.W."/>
        </authorList>
    </citation>
    <scope>NUCLEOTIDE SEQUENCE [GENOMIC DNA]</scope>
    <scope>FUNCTION</scope>
    <scope>DISRUPTION PHENOTYPE</scope>
    <scope>INDUCTION</scope>
    <source>
        <strain>ATCC MYA-4620 / CBS 123657 / FGSC 9075 / NRRL 31084 / PH-1</strain>
    </source>
</reference>
<reference key="2">
    <citation type="journal article" date="2007" name="Science">
        <title>The Fusarium graminearum genome reveals a link between localized polymorphism and pathogen specialization.</title>
        <authorList>
            <person name="Cuomo C.A."/>
            <person name="Gueldener U."/>
            <person name="Xu J.-R."/>
            <person name="Trail F."/>
            <person name="Turgeon B.G."/>
            <person name="Di Pietro A."/>
            <person name="Walton J.D."/>
            <person name="Ma L.-J."/>
            <person name="Baker S.E."/>
            <person name="Rep M."/>
            <person name="Adam G."/>
            <person name="Antoniw J."/>
            <person name="Baldwin T."/>
            <person name="Calvo S.E."/>
            <person name="Chang Y.-L."/>
            <person name="DeCaprio D."/>
            <person name="Gale L.R."/>
            <person name="Gnerre S."/>
            <person name="Goswami R.S."/>
            <person name="Hammond-Kosack K."/>
            <person name="Harris L.J."/>
            <person name="Hilburn K."/>
            <person name="Kennell J.C."/>
            <person name="Kroken S."/>
            <person name="Magnuson J.K."/>
            <person name="Mannhaupt G."/>
            <person name="Mauceli E.W."/>
            <person name="Mewes H.-W."/>
            <person name="Mitterbauer R."/>
            <person name="Muehlbauer G."/>
            <person name="Muensterkoetter M."/>
            <person name="Nelson D."/>
            <person name="O'Donnell K."/>
            <person name="Ouellet T."/>
            <person name="Qi W."/>
            <person name="Quesneville H."/>
            <person name="Roncero M.I.G."/>
            <person name="Seong K.-Y."/>
            <person name="Tetko I.V."/>
            <person name="Urban M."/>
            <person name="Waalwijk C."/>
            <person name="Ward T.J."/>
            <person name="Yao J."/>
            <person name="Birren B.W."/>
            <person name="Kistler H.C."/>
        </authorList>
    </citation>
    <scope>NUCLEOTIDE SEQUENCE [LARGE SCALE GENOMIC DNA]</scope>
    <source>
        <strain>ATCC MYA-4620 / CBS 123657 / FGSC 9075 / NRRL 31084 / PH-1</strain>
    </source>
</reference>
<reference key="3">
    <citation type="journal article" date="2010" name="Nature">
        <title>Comparative genomics reveals mobile pathogenicity chromosomes in Fusarium.</title>
        <authorList>
            <person name="Ma L.-J."/>
            <person name="van der Does H.C."/>
            <person name="Borkovich K.A."/>
            <person name="Coleman J.J."/>
            <person name="Daboussi M.-J."/>
            <person name="Di Pietro A."/>
            <person name="Dufresne M."/>
            <person name="Freitag M."/>
            <person name="Grabherr M."/>
            <person name="Henrissat B."/>
            <person name="Houterman P.M."/>
            <person name="Kang S."/>
            <person name="Shim W.-B."/>
            <person name="Woloshuk C."/>
            <person name="Xie X."/>
            <person name="Xu J.-R."/>
            <person name="Antoniw J."/>
            <person name="Baker S.E."/>
            <person name="Bluhm B.H."/>
            <person name="Breakspear A."/>
            <person name="Brown D.W."/>
            <person name="Butchko R.A.E."/>
            <person name="Chapman S."/>
            <person name="Coulson R."/>
            <person name="Coutinho P.M."/>
            <person name="Danchin E.G.J."/>
            <person name="Diener A."/>
            <person name="Gale L.R."/>
            <person name="Gardiner D.M."/>
            <person name="Goff S."/>
            <person name="Hammond-Kosack K.E."/>
            <person name="Hilburn K."/>
            <person name="Hua-Van A."/>
            <person name="Jonkers W."/>
            <person name="Kazan K."/>
            <person name="Kodira C.D."/>
            <person name="Koehrsen M."/>
            <person name="Kumar L."/>
            <person name="Lee Y.-H."/>
            <person name="Li L."/>
            <person name="Manners J.M."/>
            <person name="Miranda-Saavedra D."/>
            <person name="Mukherjee M."/>
            <person name="Park G."/>
            <person name="Park J."/>
            <person name="Park S.-Y."/>
            <person name="Proctor R.H."/>
            <person name="Regev A."/>
            <person name="Ruiz-Roldan M.C."/>
            <person name="Sain D."/>
            <person name="Sakthikumar S."/>
            <person name="Sykes S."/>
            <person name="Schwartz D.C."/>
            <person name="Turgeon B.G."/>
            <person name="Wapinski I."/>
            <person name="Yoder O."/>
            <person name="Young S."/>
            <person name="Zeng Q."/>
            <person name="Zhou S."/>
            <person name="Galagan J."/>
            <person name="Cuomo C.A."/>
            <person name="Kistler H.C."/>
            <person name="Rep M."/>
        </authorList>
    </citation>
    <scope>GENOME REANNOTATION</scope>
    <source>
        <strain>ATCC MYA-4620 / CBS 123657 / FGSC 9075 / NRRL 31084 / PH-1</strain>
    </source>
</reference>
<reference key="4">
    <citation type="journal article" date="2015" name="BMC Genomics">
        <title>The completed genome sequence of the pathogenic ascomycete fungus Fusarium graminearum.</title>
        <authorList>
            <person name="King R."/>
            <person name="Urban M."/>
            <person name="Hammond-Kosack M.C.U."/>
            <person name="Hassani-Pak K."/>
            <person name="Hammond-Kosack K.E."/>
        </authorList>
    </citation>
    <scope>NUCLEOTIDE SEQUENCE [LARGE SCALE GENOMIC DNA]</scope>
    <source>
        <strain>ATCC MYA-4620 / CBS 123657 / FGSC 9075 / NRRL 31084 / PH-1</strain>
    </source>
</reference>
<evidence type="ECO:0000255" key="1">
    <source>
        <dbReference type="PROSITE-ProRule" id="PRU00978"/>
    </source>
</evidence>
<evidence type="ECO:0000256" key="2">
    <source>
        <dbReference type="SAM" id="MobiDB-lite"/>
    </source>
</evidence>
<evidence type="ECO:0000269" key="3">
    <source>
    </source>
</evidence>
<evidence type="ECO:0000303" key="4">
    <source>
    </source>
</evidence>
<evidence type="ECO:0000305" key="5"/>
<dbReference type="EMBL" id="DQ019316">
    <property type="protein sequence ID" value="ABB90285.1"/>
    <property type="molecule type" value="Genomic_DNA"/>
</dbReference>
<dbReference type="EMBL" id="DS231663">
    <property type="protein sequence ID" value="ESU07828.1"/>
    <property type="molecule type" value="Genomic_DNA"/>
</dbReference>
<dbReference type="EMBL" id="HG970332">
    <property type="protein sequence ID" value="CEF74682.1"/>
    <property type="molecule type" value="Genomic_DNA"/>
</dbReference>
<dbReference type="RefSeq" id="XP_011318313.1">
    <property type="nucleotide sequence ID" value="XM_011320011.1"/>
</dbReference>
<dbReference type="SMR" id="I1RFC6"/>
<dbReference type="STRING" id="229533.I1RFC6"/>
<dbReference type="GeneID" id="23549776"/>
<dbReference type="KEGG" id="fgr:FGSG_02398"/>
<dbReference type="VEuPathDB" id="FungiDB:FGRAMPH1_01G05755"/>
<dbReference type="eggNOG" id="ENOG502T2FU">
    <property type="taxonomic scope" value="Eukaryota"/>
</dbReference>
<dbReference type="HOGENOM" id="CLU_836908_0_0_1"/>
<dbReference type="InParanoid" id="I1RFC6"/>
<dbReference type="OrthoDB" id="123140at110618"/>
<dbReference type="PHI-base" id="PHI:1321"/>
<dbReference type="PHI-base" id="PHI:715"/>
<dbReference type="Proteomes" id="UP000070720">
    <property type="component" value="Chromosome 1"/>
</dbReference>
<dbReference type="GO" id="GO:0005634">
    <property type="term" value="C:nucleus"/>
    <property type="evidence" value="ECO:0007669"/>
    <property type="project" value="UniProtKB-SubCell"/>
</dbReference>
<dbReference type="GO" id="GO:0003700">
    <property type="term" value="F:DNA-binding transcription factor activity"/>
    <property type="evidence" value="ECO:0007669"/>
    <property type="project" value="InterPro"/>
</dbReference>
<dbReference type="GO" id="GO:0008047">
    <property type="term" value="F:enzyme activator activity"/>
    <property type="evidence" value="ECO:0000315"/>
    <property type="project" value="UniProt"/>
</dbReference>
<dbReference type="GO" id="GO:0140537">
    <property type="term" value="F:transcription regulator activator activity"/>
    <property type="evidence" value="ECO:0000315"/>
    <property type="project" value="UniProt"/>
</dbReference>
<dbReference type="GO" id="GO:0106150">
    <property type="term" value="P:zearalenone biosynthetic process"/>
    <property type="evidence" value="ECO:0000315"/>
    <property type="project" value="GO_Central"/>
</dbReference>
<dbReference type="CDD" id="cd14688">
    <property type="entry name" value="bZIP_YAP"/>
    <property type="match status" value="1"/>
</dbReference>
<dbReference type="Gene3D" id="1.20.5.170">
    <property type="match status" value="1"/>
</dbReference>
<dbReference type="InterPro" id="IPR004827">
    <property type="entry name" value="bZIP"/>
</dbReference>
<dbReference type="InterPro" id="IPR046347">
    <property type="entry name" value="bZIP_sf"/>
</dbReference>
<dbReference type="InterPro" id="IPR052635">
    <property type="entry name" value="Sec_Metab_Biosynth_Reg"/>
</dbReference>
<dbReference type="PANTHER" id="PTHR39607:SF3">
    <property type="entry name" value="BZIP DOMAIN-CONTAINING PROTEIN"/>
    <property type="match status" value="1"/>
</dbReference>
<dbReference type="PANTHER" id="PTHR39607">
    <property type="entry name" value="XANTHOCILLIN BIOSYNTHESIS CLUSTER TRANSCRIPTION FACTOR XANC-RELATED"/>
    <property type="match status" value="1"/>
</dbReference>
<dbReference type="SUPFAM" id="SSF57959">
    <property type="entry name" value="Leucine zipper domain"/>
    <property type="match status" value="1"/>
</dbReference>
<dbReference type="PROSITE" id="PS00036">
    <property type="entry name" value="BZIP_BASIC"/>
    <property type="match status" value="1"/>
</dbReference>
<organism>
    <name type="scientific">Gibberella zeae (strain ATCC MYA-4620 / CBS 123657 / FGSC 9075 / NRRL 31084 / PH-1)</name>
    <name type="common">Wheat head blight fungus</name>
    <name type="synonym">Fusarium graminearum</name>
    <dbReference type="NCBI Taxonomy" id="229533"/>
    <lineage>
        <taxon>Eukaryota</taxon>
        <taxon>Fungi</taxon>
        <taxon>Dikarya</taxon>
        <taxon>Ascomycota</taxon>
        <taxon>Pezizomycotina</taxon>
        <taxon>Sordariomycetes</taxon>
        <taxon>Hypocreomycetidae</taxon>
        <taxon>Hypocreales</taxon>
        <taxon>Nectriaceae</taxon>
        <taxon>Fusarium</taxon>
    </lineage>
</organism>
<proteinExistence type="evidence at transcript level"/>
<feature type="chain" id="PRO_0000438786" description="Transcription factor ZEB2">
    <location>
        <begin position="1"/>
        <end position="332"/>
    </location>
</feature>
<feature type="domain" description="bZIP" evidence="1">
    <location>
        <begin position="17"/>
        <end position="50"/>
    </location>
</feature>
<feature type="region of interest" description="Disordered" evidence="2">
    <location>
        <begin position="1"/>
        <end position="37"/>
    </location>
</feature>
<feature type="region of interest" description="Basic motif" evidence="1">
    <location>
        <begin position="21"/>
        <end position="43"/>
    </location>
</feature>
<feature type="region of interest" description="Leucine-zipper" evidence="1">
    <location>
        <begin position="45"/>
        <end position="52"/>
    </location>
</feature>
<feature type="region of interest" description="Disordered" evidence="2">
    <location>
        <begin position="106"/>
        <end position="170"/>
    </location>
</feature>
<feature type="compositionally biased region" description="Basic and acidic residues" evidence="2">
    <location>
        <begin position="14"/>
        <end position="24"/>
    </location>
</feature>
<feature type="compositionally biased region" description="Polar residues" evidence="2">
    <location>
        <begin position="111"/>
        <end position="134"/>
    </location>
</feature>
<feature type="compositionally biased region" description="Low complexity" evidence="2">
    <location>
        <begin position="143"/>
        <end position="155"/>
    </location>
</feature>
<feature type="compositionally biased region" description="Polar residues" evidence="2">
    <location>
        <begin position="160"/>
        <end position="170"/>
    </location>
</feature>
<comment type="function">
    <text evidence="3">Transcription factor that specifically controls transcription of the zearalenone biosynthesis cluster genes (PubMed:16262793).</text>
</comment>
<comment type="subcellular location">
    <subcellularLocation>
        <location evidence="1">Nucleus</location>
    </subcellularLocation>
</comment>
<comment type="induction">
    <text evidence="3">Conditions for carbon-, nitrogen-, or phosphorus-starvations lead to very low expression (PubMed:16262793). Increase in pH results in gradual reduction of the gene expression (PubMed:16262793).</text>
</comment>
<comment type="disruption phenotype">
    <text evidence="3">Impairs the expression of the zearalenone biosynthesis cluster genes and results in the loss of beta-zearalenonol and zearalenone production (PubMed:16262793).</text>
</comment>
<comment type="similarity">
    <text evidence="5">Belongs to the bZIP family.</text>
</comment>
<protein>
    <recommendedName>
        <fullName evidence="4">Transcription factor ZEB2</fullName>
    </recommendedName>
    <alternativeName>
        <fullName evidence="4">Zearalenone biosynthesis protein 2</fullName>
    </alternativeName>
</protein>